<feature type="chain" id="PRO_1000099928" description="Pantothenate kinase">
    <location>
        <begin position="1"/>
        <end position="322"/>
    </location>
</feature>
<feature type="binding site" evidence="1">
    <location>
        <begin position="100"/>
        <end position="107"/>
    </location>
    <ligand>
        <name>ATP</name>
        <dbReference type="ChEBI" id="CHEBI:30616"/>
    </ligand>
</feature>
<accession>B2S986</accession>
<sequence length="322" mass="37495">MWEKVDQLTPSRYSPYRFFSAQEWAAFRADTPLTLTYEEVKRLRSLGDPIDLDEVRRIYLSLSRLLYAHVEASQLLFRQRQQFLNMEESYKTPFIIGVAGSVAVGKSTMARILKELLARWPSSPKVDLVTTDGFLYPNAVLREQNMMERKGFPESYDIGAVLRFLSAIKAGMSRVRAPLYSHLSYDVLPGEYQIVDKPDILIFEGINVLQVRDLPEDGKMVPFVSDFFDFSIYIDADPRLIHKWYIDRFMRLRETAFRDPQSFFHRYSQLSQEAARSIAEGLWQNINMKNLNENILPTRPRADLILRKGSDHLIEEVALRKI</sequence>
<dbReference type="EC" id="2.7.1.33" evidence="1"/>
<dbReference type="EMBL" id="CP000887">
    <property type="protein sequence ID" value="ACD73438.1"/>
    <property type="molecule type" value="Genomic_DNA"/>
</dbReference>
<dbReference type="RefSeq" id="WP_002965153.1">
    <property type="nucleotide sequence ID" value="NC_010742.1"/>
</dbReference>
<dbReference type="SMR" id="B2S986"/>
<dbReference type="GeneID" id="93017602"/>
<dbReference type="KEGG" id="bmc:BAbS19_I19560"/>
<dbReference type="HOGENOM" id="CLU_053818_1_1_5"/>
<dbReference type="UniPathway" id="UPA00241">
    <property type="reaction ID" value="UER00352"/>
</dbReference>
<dbReference type="Proteomes" id="UP000002565">
    <property type="component" value="Chromosome 1"/>
</dbReference>
<dbReference type="GO" id="GO:0005737">
    <property type="term" value="C:cytoplasm"/>
    <property type="evidence" value="ECO:0007669"/>
    <property type="project" value="UniProtKB-SubCell"/>
</dbReference>
<dbReference type="GO" id="GO:0005524">
    <property type="term" value="F:ATP binding"/>
    <property type="evidence" value="ECO:0007669"/>
    <property type="project" value="UniProtKB-UniRule"/>
</dbReference>
<dbReference type="GO" id="GO:0004594">
    <property type="term" value="F:pantothenate kinase activity"/>
    <property type="evidence" value="ECO:0007669"/>
    <property type="project" value="UniProtKB-UniRule"/>
</dbReference>
<dbReference type="GO" id="GO:0015937">
    <property type="term" value="P:coenzyme A biosynthetic process"/>
    <property type="evidence" value="ECO:0007669"/>
    <property type="project" value="UniProtKB-UniRule"/>
</dbReference>
<dbReference type="CDD" id="cd02025">
    <property type="entry name" value="PanK"/>
    <property type="match status" value="1"/>
</dbReference>
<dbReference type="Gene3D" id="3.40.50.300">
    <property type="entry name" value="P-loop containing nucleotide triphosphate hydrolases"/>
    <property type="match status" value="1"/>
</dbReference>
<dbReference type="HAMAP" id="MF_00215">
    <property type="entry name" value="Pantothen_kinase_1"/>
    <property type="match status" value="1"/>
</dbReference>
<dbReference type="InterPro" id="IPR027417">
    <property type="entry name" value="P-loop_NTPase"/>
</dbReference>
<dbReference type="InterPro" id="IPR004566">
    <property type="entry name" value="PanK"/>
</dbReference>
<dbReference type="InterPro" id="IPR006083">
    <property type="entry name" value="PRK/URK"/>
</dbReference>
<dbReference type="NCBIfam" id="TIGR00554">
    <property type="entry name" value="panK_bact"/>
    <property type="match status" value="1"/>
</dbReference>
<dbReference type="PANTHER" id="PTHR10285">
    <property type="entry name" value="URIDINE KINASE"/>
    <property type="match status" value="1"/>
</dbReference>
<dbReference type="Pfam" id="PF00485">
    <property type="entry name" value="PRK"/>
    <property type="match status" value="1"/>
</dbReference>
<dbReference type="PIRSF" id="PIRSF000545">
    <property type="entry name" value="Pantothenate_kin"/>
    <property type="match status" value="1"/>
</dbReference>
<dbReference type="SUPFAM" id="SSF52540">
    <property type="entry name" value="P-loop containing nucleoside triphosphate hydrolases"/>
    <property type="match status" value="1"/>
</dbReference>
<proteinExistence type="inferred from homology"/>
<name>COAA_BRUA1</name>
<gene>
    <name evidence="1" type="primary">coaA</name>
    <name type="ordered locus">BAbS19_I19560</name>
</gene>
<comment type="catalytic activity">
    <reaction evidence="1">
        <text>(R)-pantothenate + ATP = (R)-4'-phosphopantothenate + ADP + H(+)</text>
        <dbReference type="Rhea" id="RHEA:16373"/>
        <dbReference type="ChEBI" id="CHEBI:10986"/>
        <dbReference type="ChEBI" id="CHEBI:15378"/>
        <dbReference type="ChEBI" id="CHEBI:29032"/>
        <dbReference type="ChEBI" id="CHEBI:30616"/>
        <dbReference type="ChEBI" id="CHEBI:456216"/>
        <dbReference type="EC" id="2.7.1.33"/>
    </reaction>
</comment>
<comment type="pathway">
    <text evidence="1">Cofactor biosynthesis; coenzyme A biosynthesis; CoA from (R)-pantothenate: step 1/5.</text>
</comment>
<comment type="subcellular location">
    <subcellularLocation>
        <location evidence="1">Cytoplasm</location>
    </subcellularLocation>
</comment>
<comment type="similarity">
    <text evidence="1">Belongs to the prokaryotic pantothenate kinase family.</text>
</comment>
<reference key="1">
    <citation type="journal article" date="2008" name="PLoS ONE">
        <title>Genome sequence of Brucella abortus vaccine strain S19 compared to virulent strains yields candidate virulence genes.</title>
        <authorList>
            <person name="Crasta O.R."/>
            <person name="Folkerts O."/>
            <person name="Fei Z."/>
            <person name="Mane S.P."/>
            <person name="Evans C."/>
            <person name="Martino-Catt S."/>
            <person name="Bricker B."/>
            <person name="Yu G."/>
            <person name="Du L."/>
            <person name="Sobral B.W."/>
        </authorList>
    </citation>
    <scope>NUCLEOTIDE SEQUENCE [LARGE SCALE GENOMIC DNA]</scope>
    <source>
        <strain>S19</strain>
    </source>
</reference>
<protein>
    <recommendedName>
        <fullName evidence="1">Pantothenate kinase</fullName>
        <ecNumber evidence="1">2.7.1.33</ecNumber>
    </recommendedName>
    <alternativeName>
        <fullName evidence="1">Pantothenic acid kinase</fullName>
    </alternativeName>
</protein>
<keyword id="KW-0067">ATP-binding</keyword>
<keyword id="KW-0173">Coenzyme A biosynthesis</keyword>
<keyword id="KW-0963">Cytoplasm</keyword>
<keyword id="KW-0418">Kinase</keyword>
<keyword id="KW-0547">Nucleotide-binding</keyword>
<keyword id="KW-0808">Transferase</keyword>
<organism>
    <name type="scientific">Brucella abortus (strain S19)</name>
    <dbReference type="NCBI Taxonomy" id="430066"/>
    <lineage>
        <taxon>Bacteria</taxon>
        <taxon>Pseudomonadati</taxon>
        <taxon>Pseudomonadota</taxon>
        <taxon>Alphaproteobacteria</taxon>
        <taxon>Hyphomicrobiales</taxon>
        <taxon>Brucellaceae</taxon>
        <taxon>Brucella/Ochrobactrum group</taxon>
        <taxon>Brucella</taxon>
    </lineage>
</organism>
<evidence type="ECO:0000255" key="1">
    <source>
        <dbReference type="HAMAP-Rule" id="MF_00215"/>
    </source>
</evidence>